<protein>
    <recommendedName>
        <fullName evidence="5">LysM domain-containing protein ARB_03438</fullName>
    </recommendedName>
</protein>
<evidence type="ECO:0000255" key="1"/>
<evidence type="ECO:0000255" key="2">
    <source>
        <dbReference type="PROSITE-ProRule" id="PRU00498"/>
    </source>
</evidence>
<evidence type="ECO:0000255" key="3">
    <source>
        <dbReference type="PROSITE-ProRule" id="PRU01118"/>
    </source>
</evidence>
<evidence type="ECO:0000256" key="4">
    <source>
        <dbReference type="SAM" id="MobiDB-lite"/>
    </source>
</evidence>
<evidence type="ECO:0000305" key="5"/>
<evidence type="ECO:0000305" key="6">
    <source>
    </source>
</evidence>
<comment type="function">
    <text evidence="6">Might have a role in sequestration of chitin oligosaccharides (breakdown products of fungal cell walls that are released during invasion and act as triggers of host immunity) to dampen host defense.</text>
</comment>
<comment type="subcellular location">
    <subcellularLocation>
        <location evidence="5">Secreted</location>
    </subcellularLocation>
</comment>
<comment type="domain">
    <text evidence="6">The LysM domains bind chitin and potentially related carbohydrates, and might be involved in damping host defense.</text>
</comment>
<proteinExistence type="inferred from homology"/>
<accession>D4B4P8</accession>
<gene>
    <name type="ORF">ARB_03438</name>
</gene>
<feature type="signal peptide" evidence="1">
    <location>
        <begin position="1"/>
        <end position="22"/>
    </location>
</feature>
<feature type="chain" id="PRO_5003054683" description="LysM domain-containing protein ARB_03438">
    <location>
        <begin position="23"/>
        <end position="262"/>
    </location>
</feature>
<feature type="domain" description="LysM 1" evidence="3">
    <location>
        <begin position="31"/>
        <end position="75"/>
    </location>
</feature>
<feature type="domain" description="LysM 2" evidence="3">
    <location>
        <begin position="132"/>
        <end position="179"/>
    </location>
</feature>
<feature type="region of interest" description="Disordered" evidence="4">
    <location>
        <begin position="85"/>
        <end position="112"/>
    </location>
</feature>
<feature type="region of interest" description="Disordered" evidence="4">
    <location>
        <begin position="184"/>
        <end position="240"/>
    </location>
</feature>
<feature type="compositionally biased region" description="Polar residues" evidence="4">
    <location>
        <begin position="86"/>
        <end position="112"/>
    </location>
</feature>
<feature type="compositionally biased region" description="Low complexity" evidence="4">
    <location>
        <begin position="197"/>
        <end position="214"/>
    </location>
</feature>
<feature type="compositionally biased region" description="Pro residues" evidence="4">
    <location>
        <begin position="215"/>
        <end position="226"/>
    </location>
</feature>
<feature type="compositionally biased region" description="Low complexity" evidence="4">
    <location>
        <begin position="227"/>
        <end position="240"/>
    </location>
</feature>
<feature type="glycosylation site" description="N-linked (GlcNAc...) asparagine" evidence="2">
    <location>
        <position position="233"/>
    </location>
</feature>
<dbReference type="EMBL" id="ABSU01000034">
    <property type="protein sequence ID" value="EFE30096.1"/>
    <property type="molecule type" value="Genomic_DNA"/>
</dbReference>
<dbReference type="RefSeq" id="XP_003010736.1">
    <property type="nucleotide sequence ID" value="XM_003010690.1"/>
</dbReference>
<dbReference type="GeneID" id="9524849"/>
<dbReference type="KEGG" id="abe:ARB_03438"/>
<dbReference type="eggNOG" id="KOG2806">
    <property type="taxonomic scope" value="Eukaryota"/>
</dbReference>
<dbReference type="HOGENOM" id="CLU_010591_2_0_1"/>
<dbReference type="OMA" id="CLFYHPV"/>
<dbReference type="Proteomes" id="UP000008866">
    <property type="component" value="Unassembled WGS sequence"/>
</dbReference>
<dbReference type="GO" id="GO:0005576">
    <property type="term" value="C:extracellular region"/>
    <property type="evidence" value="ECO:0007669"/>
    <property type="project" value="UniProtKB-SubCell"/>
</dbReference>
<dbReference type="GO" id="GO:0008061">
    <property type="term" value="F:chitin binding"/>
    <property type="evidence" value="ECO:0007669"/>
    <property type="project" value="UniProtKB-KW"/>
</dbReference>
<dbReference type="CDD" id="cd00118">
    <property type="entry name" value="LysM"/>
    <property type="match status" value="1"/>
</dbReference>
<dbReference type="Gene3D" id="3.10.350.10">
    <property type="entry name" value="LysM domain"/>
    <property type="match status" value="2"/>
</dbReference>
<dbReference type="InterPro" id="IPR052210">
    <property type="entry name" value="LysM1-like"/>
</dbReference>
<dbReference type="InterPro" id="IPR018392">
    <property type="entry name" value="LysM_dom"/>
</dbReference>
<dbReference type="InterPro" id="IPR036779">
    <property type="entry name" value="LysM_dom_sf"/>
</dbReference>
<dbReference type="PANTHER" id="PTHR34997">
    <property type="entry name" value="AM15"/>
    <property type="match status" value="1"/>
</dbReference>
<dbReference type="PANTHER" id="PTHR34997:SF1">
    <property type="entry name" value="PEPTIDOGLYCAN-BINDING LYSIN DOMAIN"/>
    <property type="match status" value="1"/>
</dbReference>
<dbReference type="Pfam" id="PF01476">
    <property type="entry name" value="LysM"/>
    <property type="match status" value="1"/>
</dbReference>
<dbReference type="SMART" id="SM00257">
    <property type="entry name" value="LysM"/>
    <property type="match status" value="2"/>
</dbReference>
<dbReference type="SUPFAM" id="SSF54106">
    <property type="entry name" value="LysM domain"/>
    <property type="match status" value="2"/>
</dbReference>
<dbReference type="PROSITE" id="PS51782">
    <property type="entry name" value="LYSM"/>
    <property type="match status" value="2"/>
</dbReference>
<reference key="1">
    <citation type="journal article" date="2011" name="Genome Biol.">
        <title>Comparative and functional genomics provide insights into the pathogenicity of dermatophytic fungi.</title>
        <authorList>
            <person name="Burmester A."/>
            <person name="Shelest E."/>
            <person name="Gloeckner G."/>
            <person name="Heddergott C."/>
            <person name="Schindler S."/>
            <person name="Staib P."/>
            <person name="Heidel A."/>
            <person name="Felder M."/>
            <person name="Petzold A."/>
            <person name="Szafranski K."/>
            <person name="Feuermann M."/>
            <person name="Pedruzzi I."/>
            <person name="Priebe S."/>
            <person name="Groth M."/>
            <person name="Winkler R."/>
            <person name="Li W."/>
            <person name="Kniemeyer O."/>
            <person name="Schroeckh V."/>
            <person name="Hertweck C."/>
            <person name="Hube B."/>
            <person name="White T.C."/>
            <person name="Platzer M."/>
            <person name="Guthke R."/>
            <person name="Heitman J."/>
            <person name="Woestemeyer J."/>
            <person name="Zipfel P.F."/>
            <person name="Monod M."/>
            <person name="Brakhage A.A."/>
        </authorList>
    </citation>
    <scope>NUCLEOTIDE SEQUENCE [LARGE SCALE GENOMIC DNA]</scope>
    <source>
        <strain>ATCC MYA-4681 / CBS 112371</strain>
    </source>
</reference>
<reference key="2">
    <citation type="journal article" date="2009" name="Trends Microbiol.">
        <title>Fungal LysM effectors: extinguishers of host immunity?</title>
        <authorList>
            <person name="de Jonge R."/>
            <person name="Thomma B.P."/>
        </authorList>
    </citation>
    <scope>DOMAIN</scope>
    <scope>FUNCTION PREDICTION</scope>
</reference>
<sequence>MVSIPLILGAIILLGTRKAATAALPPRPCAFAVTAATDDTCQSLGAQWGIGMAQFLKWNPGVNCNALVAGKTYCLSAGDSELGPTASLTPSPQVPTTSRATQTMTSKASTGTLVSRSGPIKFLNGMAPDCLFYHPVSPGDTCQSIVDRYKAFTLDQFYTWNPSVGKNCESLWLGYYVCTGVKGGPNSPSQQPPSQQPPSQQSPSQQSPSQQSPSQQPPSQQPPSQQPPSQQSNTSQQTQPNVNSKCKFHIFCLGTLAYMAFD</sequence>
<name>LYSM2_ARTBC</name>
<keyword id="KW-0147">Chitin-binding</keyword>
<keyword id="KW-0325">Glycoprotein</keyword>
<keyword id="KW-1185">Reference proteome</keyword>
<keyword id="KW-0677">Repeat</keyword>
<keyword id="KW-0964">Secreted</keyword>
<keyword id="KW-0732">Signal</keyword>
<keyword id="KW-0843">Virulence</keyword>
<organism>
    <name type="scientific">Arthroderma benhamiae (strain ATCC MYA-4681 / CBS 112371)</name>
    <name type="common">Trichophyton mentagrophytes</name>
    <dbReference type="NCBI Taxonomy" id="663331"/>
    <lineage>
        <taxon>Eukaryota</taxon>
        <taxon>Fungi</taxon>
        <taxon>Dikarya</taxon>
        <taxon>Ascomycota</taxon>
        <taxon>Pezizomycotina</taxon>
        <taxon>Eurotiomycetes</taxon>
        <taxon>Eurotiomycetidae</taxon>
        <taxon>Onygenales</taxon>
        <taxon>Arthrodermataceae</taxon>
        <taxon>Trichophyton</taxon>
    </lineage>
</organism>